<sequence>MPEQPIAVAMSGGVDSSVVAAMLVREGRTVVGMTMQLWNQRRLPELAVEGATTGRCCSLDDVYDARRVAEQVGIPYYVVNFEEQFEEHVVKPFVDEYLAGRTPIPCTLCNNYIKFDRFLEMADSVGAYHMATGHYARIRHDEATGRYQLLRAVDDSKDQTYFLFGLTQAQLARTLFPLGELNKPEVRDMARSMDLAVAAKGDSQEICFVPNGDYAAFMSAYLKEKGVAVEETSGEIVTTDGRTLGRHEGVHRFTVGQRKGLGVATGEPLYVISTNPANHQVVVGGNDDLLRGGFTAKDVNWISIAGVEPGAPVRAQVKIRNRHAAAPARLVATSDRDRVEVVFDEAQRAVTPGQGAVFYAGDLVLGGGWIE</sequence>
<dbReference type="EC" id="2.8.1.13" evidence="1"/>
<dbReference type="EMBL" id="CP000473">
    <property type="protein sequence ID" value="ABJ81605.1"/>
    <property type="molecule type" value="Genomic_DNA"/>
</dbReference>
<dbReference type="SMR" id="Q02BG1"/>
<dbReference type="FunCoup" id="Q02BG1">
    <property type="interactions" value="632"/>
</dbReference>
<dbReference type="STRING" id="234267.Acid_0599"/>
<dbReference type="KEGG" id="sus:Acid_0599"/>
<dbReference type="eggNOG" id="COG0482">
    <property type="taxonomic scope" value="Bacteria"/>
</dbReference>
<dbReference type="HOGENOM" id="CLU_035188_0_0_0"/>
<dbReference type="InParanoid" id="Q02BG1"/>
<dbReference type="OrthoDB" id="9800696at2"/>
<dbReference type="GO" id="GO:0005737">
    <property type="term" value="C:cytoplasm"/>
    <property type="evidence" value="ECO:0007669"/>
    <property type="project" value="UniProtKB-SubCell"/>
</dbReference>
<dbReference type="GO" id="GO:0005524">
    <property type="term" value="F:ATP binding"/>
    <property type="evidence" value="ECO:0007669"/>
    <property type="project" value="UniProtKB-KW"/>
</dbReference>
<dbReference type="GO" id="GO:0000049">
    <property type="term" value="F:tRNA binding"/>
    <property type="evidence" value="ECO:0007669"/>
    <property type="project" value="UniProtKB-KW"/>
</dbReference>
<dbReference type="GO" id="GO:0103016">
    <property type="term" value="F:tRNA-uridine 2-sulfurtransferase activity"/>
    <property type="evidence" value="ECO:0007669"/>
    <property type="project" value="UniProtKB-EC"/>
</dbReference>
<dbReference type="GO" id="GO:0002143">
    <property type="term" value="P:tRNA wobble position uridine thiolation"/>
    <property type="evidence" value="ECO:0007669"/>
    <property type="project" value="TreeGrafter"/>
</dbReference>
<dbReference type="CDD" id="cd01998">
    <property type="entry name" value="MnmA_TRMU-like"/>
    <property type="match status" value="1"/>
</dbReference>
<dbReference type="FunFam" id="2.30.30.280:FF:000001">
    <property type="entry name" value="tRNA-specific 2-thiouridylase MnmA"/>
    <property type="match status" value="1"/>
</dbReference>
<dbReference type="FunFam" id="3.40.50.620:FF:000115">
    <property type="entry name" value="tRNA-specific 2-thiouridylase MnmA"/>
    <property type="match status" value="1"/>
</dbReference>
<dbReference type="Gene3D" id="2.30.30.280">
    <property type="entry name" value="Adenine nucleotide alpha hydrolases-like domains"/>
    <property type="match status" value="1"/>
</dbReference>
<dbReference type="Gene3D" id="3.40.50.620">
    <property type="entry name" value="HUPs"/>
    <property type="match status" value="1"/>
</dbReference>
<dbReference type="Gene3D" id="2.40.30.10">
    <property type="entry name" value="Translation factors"/>
    <property type="match status" value="1"/>
</dbReference>
<dbReference type="HAMAP" id="MF_00144">
    <property type="entry name" value="tRNA_thiouridyl_MnmA"/>
    <property type="match status" value="1"/>
</dbReference>
<dbReference type="InterPro" id="IPR004506">
    <property type="entry name" value="MnmA-like"/>
</dbReference>
<dbReference type="InterPro" id="IPR046885">
    <property type="entry name" value="MnmA-like_C"/>
</dbReference>
<dbReference type="InterPro" id="IPR046884">
    <property type="entry name" value="MnmA-like_central"/>
</dbReference>
<dbReference type="InterPro" id="IPR023382">
    <property type="entry name" value="MnmA-like_central_sf"/>
</dbReference>
<dbReference type="InterPro" id="IPR014729">
    <property type="entry name" value="Rossmann-like_a/b/a_fold"/>
</dbReference>
<dbReference type="NCBIfam" id="NF001138">
    <property type="entry name" value="PRK00143.1"/>
    <property type="match status" value="1"/>
</dbReference>
<dbReference type="NCBIfam" id="TIGR00420">
    <property type="entry name" value="trmU"/>
    <property type="match status" value="1"/>
</dbReference>
<dbReference type="PANTHER" id="PTHR11933:SF5">
    <property type="entry name" value="MITOCHONDRIAL TRNA-SPECIFIC 2-THIOURIDYLASE 1"/>
    <property type="match status" value="1"/>
</dbReference>
<dbReference type="PANTHER" id="PTHR11933">
    <property type="entry name" value="TRNA 5-METHYLAMINOMETHYL-2-THIOURIDYLATE -METHYLTRANSFERASE"/>
    <property type="match status" value="1"/>
</dbReference>
<dbReference type="Pfam" id="PF03054">
    <property type="entry name" value="tRNA_Me_trans"/>
    <property type="match status" value="1"/>
</dbReference>
<dbReference type="Pfam" id="PF20258">
    <property type="entry name" value="tRNA_Me_trans_C"/>
    <property type="match status" value="1"/>
</dbReference>
<dbReference type="Pfam" id="PF20259">
    <property type="entry name" value="tRNA_Me_trans_M"/>
    <property type="match status" value="1"/>
</dbReference>
<dbReference type="SUPFAM" id="SSF52402">
    <property type="entry name" value="Adenine nucleotide alpha hydrolases-like"/>
    <property type="match status" value="1"/>
</dbReference>
<evidence type="ECO:0000255" key="1">
    <source>
        <dbReference type="HAMAP-Rule" id="MF_00144"/>
    </source>
</evidence>
<reference key="1">
    <citation type="journal article" date="2009" name="Appl. Environ. Microbiol.">
        <title>Three genomes from the phylum Acidobacteria provide insight into the lifestyles of these microorganisms in soils.</title>
        <authorList>
            <person name="Ward N.L."/>
            <person name="Challacombe J.F."/>
            <person name="Janssen P.H."/>
            <person name="Henrissat B."/>
            <person name="Coutinho P.M."/>
            <person name="Wu M."/>
            <person name="Xie G."/>
            <person name="Haft D.H."/>
            <person name="Sait M."/>
            <person name="Badger J."/>
            <person name="Barabote R.D."/>
            <person name="Bradley B."/>
            <person name="Brettin T.S."/>
            <person name="Brinkac L.M."/>
            <person name="Bruce D."/>
            <person name="Creasy T."/>
            <person name="Daugherty S.C."/>
            <person name="Davidsen T.M."/>
            <person name="DeBoy R.T."/>
            <person name="Detter J.C."/>
            <person name="Dodson R.J."/>
            <person name="Durkin A.S."/>
            <person name="Ganapathy A."/>
            <person name="Gwinn-Giglio M."/>
            <person name="Han C.S."/>
            <person name="Khouri H."/>
            <person name="Kiss H."/>
            <person name="Kothari S.P."/>
            <person name="Madupu R."/>
            <person name="Nelson K.E."/>
            <person name="Nelson W.C."/>
            <person name="Paulsen I."/>
            <person name="Penn K."/>
            <person name="Ren Q."/>
            <person name="Rosovitz M.J."/>
            <person name="Selengut J.D."/>
            <person name="Shrivastava S."/>
            <person name="Sullivan S.A."/>
            <person name="Tapia R."/>
            <person name="Thompson L.S."/>
            <person name="Watkins K.L."/>
            <person name="Yang Q."/>
            <person name="Yu C."/>
            <person name="Zafar N."/>
            <person name="Zhou L."/>
            <person name="Kuske C.R."/>
        </authorList>
    </citation>
    <scope>NUCLEOTIDE SEQUENCE [LARGE SCALE GENOMIC DNA]</scope>
    <source>
        <strain>Ellin6076</strain>
    </source>
</reference>
<comment type="function">
    <text evidence="1">Catalyzes the 2-thiolation of uridine at the wobble position (U34) of tRNA, leading to the formation of s(2)U34.</text>
</comment>
<comment type="catalytic activity">
    <reaction evidence="1">
        <text>S-sulfanyl-L-cysteinyl-[protein] + uridine(34) in tRNA + AH2 + ATP = 2-thiouridine(34) in tRNA + L-cysteinyl-[protein] + A + AMP + diphosphate + H(+)</text>
        <dbReference type="Rhea" id="RHEA:47032"/>
        <dbReference type="Rhea" id="RHEA-COMP:10131"/>
        <dbReference type="Rhea" id="RHEA-COMP:11726"/>
        <dbReference type="Rhea" id="RHEA-COMP:11727"/>
        <dbReference type="Rhea" id="RHEA-COMP:11728"/>
        <dbReference type="ChEBI" id="CHEBI:13193"/>
        <dbReference type="ChEBI" id="CHEBI:15378"/>
        <dbReference type="ChEBI" id="CHEBI:17499"/>
        <dbReference type="ChEBI" id="CHEBI:29950"/>
        <dbReference type="ChEBI" id="CHEBI:30616"/>
        <dbReference type="ChEBI" id="CHEBI:33019"/>
        <dbReference type="ChEBI" id="CHEBI:61963"/>
        <dbReference type="ChEBI" id="CHEBI:65315"/>
        <dbReference type="ChEBI" id="CHEBI:87170"/>
        <dbReference type="ChEBI" id="CHEBI:456215"/>
        <dbReference type="EC" id="2.8.1.13"/>
    </reaction>
</comment>
<comment type="subcellular location">
    <subcellularLocation>
        <location evidence="1">Cytoplasm</location>
    </subcellularLocation>
</comment>
<comment type="similarity">
    <text evidence="1">Belongs to the MnmA/TRMU family.</text>
</comment>
<organism>
    <name type="scientific">Solibacter usitatus (strain Ellin6076)</name>
    <dbReference type="NCBI Taxonomy" id="234267"/>
    <lineage>
        <taxon>Bacteria</taxon>
        <taxon>Pseudomonadati</taxon>
        <taxon>Acidobacteriota</taxon>
        <taxon>Terriglobia</taxon>
        <taxon>Bryobacterales</taxon>
        <taxon>Solibacteraceae</taxon>
        <taxon>Candidatus Solibacter</taxon>
    </lineage>
</organism>
<feature type="chain" id="PRO_1000009579" description="tRNA-specific 2-thiouridylase MnmA">
    <location>
        <begin position="1"/>
        <end position="371"/>
    </location>
</feature>
<feature type="region of interest" description="Interaction with tRNA" evidence="1">
    <location>
        <begin position="157"/>
        <end position="159"/>
    </location>
</feature>
<feature type="active site" description="Nucleophile" evidence="1">
    <location>
        <position position="109"/>
    </location>
</feature>
<feature type="active site" description="Cysteine persulfide intermediate" evidence="1">
    <location>
        <position position="207"/>
    </location>
</feature>
<feature type="binding site" evidence="1">
    <location>
        <begin position="9"/>
        <end position="16"/>
    </location>
    <ligand>
        <name>ATP</name>
        <dbReference type="ChEBI" id="CHEBI:30616"/>
    </ligand>
</feature>
<feature type="binding site" evidence="1">
    <location>
        <position position="35"/>
    </location>
    <ligand>
        <name>ATP</name>
        <dbReference type="ChEBI" id="CHEBI:30616"/>
    </ligand>
</feature>
<feature type="binding site" evidence="1">
    <location>
        <position position="133"/>
    </location>
    <ligand>
        <name>ATP</name>
        <dbReference type="ChEBI" id="CHEBI:30616"/>
    </ligand>
</feature>
<feature type="site" description="Interaction with tRNA" evidence="1">
    <location>
        <position position="134"/>
    </location>
</feature>
<feature type="site" description="Interaction with tRNA" evidence="1">
    <location>
        <position position="354"/>
    </location>
</feature>
<feature type="disulfide bond" description="Alternate" evidence="1">
    <location>
        <begin position="109"/>
        <end position="207"/>
    </location>
</feature>
<gene>
    <name evidence="1" type="primary">mnmA</name>
    <name type="synonym">trmU</name>
    <name type="ordered locus">Acid_0599</name>
</gene>
<proteinExistence type="inferred from homology"/>
<name>MNMA_SOLUE</name>
<keyword id="KW-0067">ATP-binding</keyword>
<keyword id="KW-0963">Cytoplasm</keyword>
<keyword id="KW-1015">Disulfide bond</keyword>
<keyword id="KW-0547">Nucleotide-binding</keyword>
<keyword id="KW-0694">RNA-binding</keyword>
<keyword id="KW-0808">Transferase</keyword>
<keyword id="KW-0819">tRNA processing</keyword>
<keyword id="KW-0820">tRNA-binding</keyword>
<accession>Q02BG1</accession>
<protein>
    <recommendedName>
        <fullName evidence="1">tRNA-specific 2-thiouridylase MnmA</fullName>
        <ecNumber evidence="1">2.8.1.13</ecNumber>
    </recommendedName>
</protein>